<keyword id="KW-0472">Membrane</keyword>
<keyword id="KW-1185">Reference proteome</keyword>
<keyword id="KW-0812">Transmembrane</keyword>
<keyword id="KW-1133">Transmembrane helix</keyword>
<protein>
    <recommendedName>
        <fullName>Uncharacterized protein MG441</fullName>
    </recommendedName>
</protein>
<sequence>MSVSFLRSKFSLKASVFAFFVLFLFCLKIILVLFRNFGKRFKHFLFNQTSLYLLVRLFQKTEIVWNLIANIHFFIKTQIQNLGIRLSRESISNETFQAVKLFHVNNLGLQEQEVINSKLSDYFCFFKYRNLLFVNW</sequence>
<organism>
    <name type="scientific">Mycoplasma genitalium (strain ATCC 33530 / DSM 19775 / NCTC 10195 / G37)</name>
    <name type="common">Mycoplasmoides genitalium</name>
    <dbReference type="NCBI Taxonomy" id="243273"/>
    <lineage>
        <taxon>Bacteria</taxon>
        <taxon>Bacillati</taxon>
        <taxon>Mycoplasmatota</taxon>
        <taxon>Mycoplasmoidales</taxon>
        <taxon>Mycoplasmoidaceae</taxon>
        <taxon>Mycoplasmoides</taxon>
    </lineage>
</organism>
<evidence type="ECO:0000255" key="1"/>
<evidence type="ECO:0000305" key="2"/>
<reference key="1">
    <citation type="journal article" date="1995" name="Science">
        <title>The minimal gene complement of Mycoplasma genitalium.</title>
        <authorList>
            <person name="Fraser C.M."/>
            <person name="Gocayne J.D."/>
            <person name="White O."/>
            <person name="Adams M.D."/>
            <person name="Clayton R.A."/>
            <person name="Fleischmann R.D."/>
            <person name="Bult C.J."/>
            <person name="Kerlavage A.R."/>
            <person name="Sutton G.G."/>
            <person name="Kelley J.M."/>
            <person name="Fritchman J.L."/>
            <person name="Weidman J.F."/>
            <person name="Small K.V."/>
            <person name="Sandusky M."/>
            <person name="Fuhrmann J.L."/>
            <person name="Nguyen D.T."/>
            <person name="Utterback T.R."/>
            <person name="Saudek D.M."/>
            <person name="Phillips C.A."/>
            <person name="Merrick J.M."/>
            <person name="Tomb J.-F."/>
            <person name="Dougherty B.A."/>
            <person name="Bott K.F."/>
            <person name="Hu P.-C."/>
            <person name="Lucier T.S."/>
            <person name="Peterson S.N."/>
            <person name="Smith H.O."/>
            <person name="Hutchison C.A. III"/>
            <person name="Venter J.C."/>
        </authorList>
    </citation>
    <scope>NUCLEOTIDE SEQUENCE [LARGE SCALE GENOMIC DNA]</scope>
    <source>
        <strain>ATCC 33530 / DSM 19775 / NCTC 10195 / G37</strain>
    </source>
</reference>
<reference key="2">
    <citation type="journal article" date="1993" name="J. Bacteriol.">
        <title>A survey of the Mycoplasma genitalium genome by using random sequencing.</title>
        <authorList>
            <person name="Peterson S.N."/>
            <person name="Hu P.-C."/>
            <person name="Bott K.F."/>
            <person name="Hutchison C.A. III"/>
        </authorList>
    </citation>
    <scope>NUCLEOTIDE SEQUENCE [GENOMIC DNA] OF 8-106</scope>
    <source>
        <strain>ATCC 33530 / DSM 19775 / NCTC 10195 / G37</strain>
    </source>
</reference>
<accession>P47679</accession>
<accession>Q49261</accession>
<name>Y441_MYCGE</name>
<comment type="subcellular location">
    <subcellularLocation>
        <location evidence="2">Membrane</location>
        <topology evidence="2">Single-pass membrane protein</topology>
    </subcellularLocation>
</comment>
<feature type="chain" id="PRO_0000210612" description="Uncharacterized protein MG441">
    <location>
        <begin position="1"/>
        <end position="136"/>
    </location>
</feature>
<feature type="transmembrane region" description="Helical" evidence="1">
    <location>
        <begin position="14"/>
        <end position="34"/>
    </location>
</feature>
<feature type="sequence conflict" description="In Ref. 2; AAD12405." evidence="2" ref="2">
    <original>I</original>
    <variation>V</variation>
    <location>
        <position position="91"/>
    </location>
</feature>
<gene>
    <name type="ordered locus">MG441</name>
</gene>
<proteinExistence type="predicted"/>
<dbReference type="EMBL" id="L43967">
    <property type="protein sequence ID" value="AAC72461.1"/>
    <property type="molecule type" value="Genomic_DNA"/>
</dbReference>
<dbReference type="EMBL" id="U02128">
    <property type="protein sequence ID" value="AAD12405.1"/>
    <property type="molecule type" value="Genomic_DNA"/>
</dbReference>
<dbReference type="PIR" id="G64248">
    <property type="entry name" value="G64248"/>
</dbReference>
<dbReference type="RefSeq" id="WP_009885592.1">
    <property type="nucleotide sequence ID" value="NC_000908.2"/>
</dbReference>
<dbReference type="STRING" id="243273.MG_441"/>
<dbReference type="GeneID" id="88282621"/>
<dbReference type="KEGG" id="mge:MG_441"/>
<dbReference type="eggNOG" id="ENOG5031ZKF">
    <property type="taxonomic scope" value="Bacteria"/>
</dbReference>
<dbReference type="HOGENOM" id="CLU_1873153_0_0_14"/>
<dbReference type="InParanoid" id="P47679"/>
<dbReference type="OrthoDB" id="10014778at2"/>
<dbReference type="BioCyc" id="MGEN243273:G1GJ2-534-MONOMER"/>
<dbReference type="Proteomes" id="UP000000807">
    <property type="component" value="Chromosome"/>
</dbReference>
<dbReference type="GO" id="GO:0016020">
    <property type="term" value="C:membrane"/>
    <property type="evidence" value="ECO:0007669"/>
    <property type="project" value="UniProtKB-SubCell"/>
</dbReference>
<dbReference type="InterPro" id="IPR035339">
    <property type="entry name" value="DUF5426"/>
</dbReference>
<dbReference type="Pfam" id="PF17473">
    <property type="entry name" value="DUF5426"/>
    <property type="match status" value="1"/>
</dbReference>